<keyword id="KW-0963">Cytoplasm</keyword>
<keyword id="KW-0342">GTP-binding</keyword>
<keyword id="KW-0378">Hydrolase</keyword>
<keyword id="KW-0460">Magnesium</keyword>
<keyword id="KW-0479">Metal-binding</keyword>
<keyword id="KW-0547">Nucleotide-binding</keyword>
<keyword id="KW-0630">Potassium</keyword>
<keyword id="KW-1185">Reference proteome</keyword>
<keyword id="KW-0819">tRNA processing</keyword>
<name>MNME_CHLTR</name>
<evidence type="ECO:0000255" key="1">
    <source>
        <dbReference type="HAMAP-Rule" id="MF_00379"/>
    </source>
</evidence>
<proteinExistence type="inferred from homology"/>
<gene>
    <name evidence="1" type="primary">mnmE</name>
    <name evidence="1" type="synonym">thdF</name>
    <name evidence="1" type="synonym">trmE</name>
    <name type="ordered locus">CT_698</name>
</gene>
<protein>
    <recommendedName>
        <fullName evidence="1">tRNA modification GTPase MnmE</fullName>
        <ecNumber evidence="1">3.6.-.-</ecNumber>
    </recommendedName>
</protein>
<dbReference type="EC" id="3.6.-.-" evidence="1"/>
<dbReference type="EMBL" id="AE001273">
    <property type="protein sequence ID" value="AAC68293.1"/>
    <property type="molecule type" value="Genomic_DNA"/>
</dbReference>
<dbReference type="PIR" id="D71482">
    <property type="entry name" value="D71482"/>
</dbReference>
<dbReference type="RefSeq" id="NP_220217.1">
    <property type="nucleotide sequence ID" value="NC_000117.1"/>
</dbReference>
<dbReference type="RefSeq" id="WP_009872073.1">
    <property type="nucleotide sequence ID" value="NC_000117.1"/>
</dbReference>
<dbReference type="SMR" id="O84704"/>
<dbReference type="FunCoup" id="O84704">
    <property type="interactions" value="258"/>
</dbReference>
<dbReference type="STRING" id="272561.CT_698"/>
<dbReference type="EnsemblBacteria" id="AAC68293">
    <property type="protein sequence ID" value="AAC68293"/>
    <property type="gene ID" value="CT_698"/>
</dbReference>
<dbReference type="GeneID" id="884487"/>
<dbReference type="KEGG" id="ctr:CT_698"/>
<dbReference type="PATRIC" id="fig|272561.5.peg.768"/>
<dbReference type="HOGENOM" id="CLU_019624_4_1_0"/>
<dbReference type="InParanoid" id="O84704"/>
<dbReference type="OrthoDB" id="9805918at2"/>
<dbReference type="Proteomes" id="UP000000431">
    <property type="component" value="Chromosome"/>
</dbReference>
<dbReference type="GO" id="GO:0005737">
    <property type="term" value="C:cytoplasm"/>
    <property type="evidence" value="ECO:0000318"/>
    <property type="project" value="GO_Central"/>
</dbReference>
<dbReference type="GO" id="GO:0005829">
    <property type="term" value="C:cytosol"/>
    <property type="evidence" value="ECO:0000318"/>
    <property type="project" value="GO_Central"/>
</dbReference>
<dbReference type="GO" id="GO:0005525">
    <property type="term" value="F:GTP binding"/>
    <property type="evidence" value="ECO:0007669"/>
    <property type="project" value="UniProtKB-UniRule"/>
</dbReference>
<dbReference type="GO" id="GO:0003924">
    <property type="term" value="F:GTPase activity"/>
    <property type="evidence" value="ECO:0007669"/>
    <property type="project" value="UniProtKB-UniRule"/>
</dbReference>
<dbReference type="GO" id="GO:0046872">
    <property type="term" value="F:metal ion binding"/>
    <property type="evidence" value="ECO:0007669"/>
    <property type="project" value="UniProtKB-KW"/>
</dbReference>
<dbReference type="GO" id="GO:0030488">
    <property type="term" value="P:tRNA methylation"/>
    <property type="evidence" value="ECO:0000318"/>
    <property type="project" value="GO_Central"/>
</dbReference>
<dbReference type="GO" id="GO:0002098">
    <property type="term" value="P:tRNA wobble uridine modification"/>
    <property type="evidence" value="ECO:0000318"/>
    <property type="project" value="GO_Central"/>
</dbReference>
<dbReference type="CDD" id="cd04164">
    <property type="entry name" value="trmE"/>
    <property type="match status" value="1"/>
</dbReference>
<dbReference type="CDD" id="cd14858">
    <property type="entry name" value="TrmE_N"/>
    <property type="match status" value="1"/>
</dbReference>
<dbReference type="FunFam" id="3.30.1360.120:FF:000003">
    <property type="entry name" value="tRNA modification GTPase MnmE"/>
    <property type="match status" value="1"/>
</dbReference>
<dbReference type="FunFam" id="3.40.50.300:FF:001376">
    <property type="entry name" value="tRNA modification GTPase MnmE"/>
    <property type="match status" value="1"/>
</dbReference>
<dbReference type="Gene3D" id="3.40.50.300">
    <property type="entry name" value="P-loop containing nucleotide triphosphate hydrolases"/>
    <property type="match status" value="1"/>
</dbReference>
<dbReference type="Gene3D" id="3.30.1360.120">
    <property type="entry name" value="Probable tRNA modification gtpase trme, domain 1"/>
    <property type="match status" value="1"/>
</dbReference>
<dbReference type="Gene3D" id="1.20.120.430">
    <property type="entry name" value="tRNA modification GTPase MnmE domain 2"/>
    <property type="match status" value="1"/>
</dbReference>
<dbReference type="HAMAP" id="MF_00379">
    <property type="entry name" value="GTPase_MnmE"/>
    <property type="match status" value="1"/>
</dbReference>
<dbReference type="InterPro" id="IPR031168">
    <property type="entry name" value="G_TrmE"/>
</dbReference>
<dbReference type="InterPro" id="IPR006073">
    <property type="entry name" value="GTP-bd"/>
</dbReference>
<dbReference type="InterPro" id="IPR018948">
    <property type="entry name" value="GTP-bd_TrmE_N"/>
</dbReference>
<dbReference type="InterPro" id="IPR004520">
    <property type="entry name" value="GTPase_MnmE"/>
</dbReference>
<dbReference type="InterPro" id="IPR027368">
    <property type="entry name" value="MnmE_dom2"/>
</dbReference>
<dbReference type="InterPro" id="IPR025867">
    <property type="entry name" value="MnmE_helical"/>
</dbReference>
<dbReference type="InterPro" id="IPR027417">
    <property type="entry name" value="P-loop_NTPase"/>
</dbReference>
<dbReference type="InterPro" id="IPR005225">
    <property type="entry name" value="Small_GTP-bd"/>
</dbReference>
<dbReference type="InterPro" id="IPR027266">
    <property type="entry name" value="TrmE/GcvT_dom1"/>
</dbReference>
<dbReference type="NCBIfam" id="TIGR00450">
    <property type="entry name" value="mnmE_trmE_thdF"/>
    <property type="match status" value="1"/>
</dbReference>
<dbReference type="NCBIfam" id="TIGR00231">
    <property type="entry name" value="small_GTP"/>
    <property type="match status" value="1"/>
</dbReference>
<dbReference type="PANTHER" id="PTHR42714">
    <property type="entry name" value="TRNA MODIFICATION GTPASE GTPBP3"/>
    <property type="match status" value="1"/>
</dbReference>
<dbReference type="PANTHER" id="PTHR42714:SF2">
    <property type="entry name" value="TRNA MODIFICATION GTPASE GTPBP3, MITOCHONDRIAL"/>
    <property type="match status" value="1"/>
</dbReference>
<dbReference type="Pfam" id="PF01926">
    <property type="entry name" value="MMR_HSR1"/>
    <property type="match status" value="1"/>
</dbReference>
<dbReference type="Pfam" id="PF12631">
    <property type="entry name" value="MnmE_helical"/>
    <property type="match status" value="1"/>
</dbReference>
<dbReference type="Pfam" id="PF10396">
    <property type="entry name" value="TrmE_N"/>
    <property type="match status" value="1"/>
</dbReference>
<dbReference type="SUPFAM" id="SSF52540">
    <property type="entry name" value="P-loop containing nucleoside triphosphate hydrolases"/>
    <property type="match status" value="1"/>
</dbReference>
<dbReference type="PROSITE" id="PS51709">
    <property type="entry name" value="G_TRME"/>
    <property type="match status" value="1"/>
</dbReference>
<feature type="chain" id="PRO_0000188867" description="tRNA modification GTPase MnmE">
    <location>
        <begin position="1"/>
        <end position="444"/>
    </location>
</feature>
<feature type="domain" description="TrmE-type G">
    <location>
        <begin position="216"/>
        <end position="365"/>
    </location>
</feature>
<feature type="binding site" evidence="1">
    <location>
        <position position="23"/>
    </location>
    <ligand>
        <name>(6S)-5-formyl-5,6,7,8-tetrahydrofolate</name>
        <dbReference type="ChEBI" id="CHEBI:57457"/>
    </ligand>
</feature>
<feature type="binding site" evidence="1">
    <location>
        <position position="82"/>
    </location>
    <ligand>
        <name>(6S)-5-formyl-5,6,7,8-tetrahydrofolate</name>
        <dbReference type="ChEBI" id="CHEBI:57457"/>
    </ligand>
</feature>
<feature type="binding site" evidence="1">
    <location>
        <position position="121"/>
    </location>
    <ligand>
        <name>(6S)-5-formyl-5,6,7,8-tetrahydrofolate</name>
        <dbReference type="ChEBI" id="CHEBI:57457"/>
    </ligand>
</feature>
<feature type="binding site" evidence="1">
    <location>
        <begin position="226"/>
        <end position="231"/>
    </location>
    <ligand>
        <name>GTP</name>
        <dbReference type="ChEBI" id="CHEBI:37565"/>
    </ligand>
</feature>
<feature type="binding site" evidence="1">
    <location>
        <position position="226"/>
    </location>
    <ligand>
        <name>K(+)</name>
        <dbReference type="ChEBI" id="CHEBI:29103"/>
    </ligand>
</feature>
<feature type="binding site" evidence="1">
    <location>
        <position position="230"/>
    </location>
    <ligand>
        <name>Mg(2+)</name>
        <dbReference type="ChEBI" id="CHEBI:18420"/>
    </ligand>
</feature>
<feature type="binding site" evidence="1">
    <location>
        <begin position="245"/>
        <end position="251"/>
    </location>
    <ligand>
        <name>GTP</name>
        <dbReference type="ChEBI" id="CHEBI:37565"/>
    </ligand>
</feature>
<feature type="binding site" evidence="1">
    <location>
        <position position="245"/>
    </location>
    <ligand>
        <name>K(+)</name>
        <dbReference type="ChEBI" id="CHEBI:29103"/>
    </ligand>
</feature>
<feature type="binding site" evidence="1">
    <location>
        <position position="247"/>
    </location>
    <ligand>
        <name>K(+)</name>
        <dbReference type="ChEBI" id="CHEBI:29103"/>
    </ligand>
</feature>
<feature type="binding site" evidence="1">
    <location>
        <position position="250"/>
    </location>
    <ligand>
        <name>K(+)</name>
        <dbReference type="ChEBI" id="CHEBI:29103"/>
    </ligand>
</feature>
<feature type="binding site" evidence="1">
    <location>
        <position position="251"/>
    </location>
    <ligand>
        <name>Mg(2+)</name>
        <dbReference type="ChEBI" id="CHEBI:18420"/>
    </ligand>
</feature>
<feature type="binding site" evidence="1">
    <location>
        <begin position="270"/>
        <end position="273"/>
    </location>
    <ligand>
        <name>GTP</name>
        <dbReference type="ChEBI" id="CHEBI:37565"/>
    </ligand>
</feature>
<feature type="binding site" evidence="1">
    <location>
        <position position="444"/>
    </location>
    <ligand>
        <name>(6S)-5-formyl-5,6,7,8-tetrahydrofolate</name>
        <dbReference type="ChEBI" id="CHEBI:57457"/>
    </ligand>
</feature>
<reference key="1">
    <citation type="journal article" date="1998" name="Science">
        <title>Genome sequence of an obligate intracellular pathogen of humans: Chlamydia trachomatis.</title>
        <authorList>
            <person name="Stephens R.S."/>
            <person name="Kalman S."/>
            <person name="Lammel C.J."/>
            <person name="Fan J."/>
            <person name="Marathe R."/>
            <person name="Aravind L."/>
            <person name="Mitchell W.P."/>
            <person name="Olinger L."/>
            <person name="Tatusov R.L."/>
            <person name="Zhao Q."/>
            <person name="Koonin E.V."/>
            <person name="Davis R.W."/>
        </authorList>
    </citation>
    <scope>NUCLEOTIDE SEQUENCE [LARGE SCALE GENOMIC DNA]</scope>
    <source>
        <strain>ATCC VR-885 / DSM 19411 / UW-3/Cx</strain>
    </source>
</reference>
<accession>O84704</accession>
<comment type="function">
    <text evidence="1">Exhibits a very high intrinsic GTPase hydrolysis rate. Involved in the addition of a carboxymethylaminomethyl (cmnm) group at the wobble position (U34) of certain tRNAs, forming tRNA-cmnm(5)s(2)U34.</text>
</comment>
<comment type="cofactor">
    <cofactor evidence="1">
        <name>K(+)</name>
        <dbReference type="ChEBI" id="CHEBI:29103"/>
    </cofactor>
    <text evidence="1">Binds 1 potassium ion per subunit.</text>
</comment>
<comment type="subunit">
    <text evidence="1">Homodimer. Heterotetramer of two MnmE and two MnmG subunits.</text>
</comment>
<comment type="subcellular location">
    <subcellularLocation>
        <location evidence="1">Cytoplasm</location>
    </subcellularLocation>
</comment>
<comment type="similarity">
    <text evidence="1">Belongs to the TRAFAC class TrmE-Era-EngA-EngB-Septin-like GTPase superfamily. TrmE GTPase family.</text>
</comment>
<organism>
    <name type="scientific">Chlamydia trachomatis serovar D (strain ATCC VR-885 / DSM 19411 / UW-3/Cx)</name>
    <dbReference type="NCBI Taxonomy" id="272561"/>
    <lineage>
        <taxon>Bacteria</taxon>
        <taxon>Pseudomonadati</taxon>
        <taxon>Chlamydiota</taxon>
        <taxon>Chlamydiia</taxon>
        <taxon>Chlamydiales</taxon>
        <taxon>Chlamydiaceae</taxon>
        <taxon>Chlamydia/Chlamydophila group</taxon>
        <taxon>Chlamydia</taxon>
    </lineage>
</organism>
<sequence>MLRNDTITAIATPPGEGSIAIVRVSGPDAISISDRIFSGNIAGYASHTAHLGTVSHNAVCIDQALVLVMRAPRSFTGEDIVEFQCHGGYFACSQIVNALLAEGARAALPGEFSQRAFLNGKIDLIQAEAIQQLIAADNIDAFRIAQNQFQGHTSQAISSISSLIIEALAYIEVLADFPEEDIETEDSLPKHRIMEALSITDELLSSFDEGQRLAQGTSIVLAGLPNAGKSSILNALTQKNRAIVTDIPGTTRDILEENWVLQGKNLRLIDSAGLRETENLVEKEGIARAREAMSQAEGILWVVDASQPLPEFPTILYQKPTILLWNKCDIVSPPQIEVPFQQISVSAKTGEGLLELKQALQKWLNTTQLGKSSKIFLVSARHHSLLHSVYTCLTAALNGFTEHLPNECIALDLRQALHSIGNLSGSEVTENVLGEIFSKFCIGK</sequence>